<evidence type="ECO:0000255" key="1">
    <source>
        <dbReference type="HAMAP-Rule" id="MF_00099"/>
    </source>
</evidence>
<comment type="function">
    <text evidence="1">Involved in chemotaxis. Part of a chemotaxis signal transduction system that modulates chemotaxis in response to various stimuli. Catalyzes the demethylation of specific methylglutamate residues introduced into the chemoreceptors (methyl-accepting chemotaxis proteins or MCP) by CheR. Also mediates the irreversible deamidation of specific glutamine residues to glutamic acid.</text>
</comment>
<comment type="catalytic activity">
    <reaction evidence="1">
        <text>[protein]-L-glutamate 5-O-methyl ester + H2O = L-glutamyl-[protein] + methanol + H(+)</text>
        <dbReference type="Rhea" id="RHEA:23236"/>
        <dbReference type="Rhea" id="RHEA-COMP:10208"/>
        <dbReference type="Rhea" id="RHEA-COMP:10311"/>
        <dbReference type="ChEBI" id="CHEBI:15377"/>
        <dbReference type="ChEBI" id="CHEBI:15378"/>
        <dbReference type="ChEBI" id="CHEBI:17790"/>
        <dbReference type="ChEBI" id="CHEBI:29973"/>
        <dbReference type="ChEBI" id="CHEBI:82795"/>
        <dbReference type="EC" id="3.1.1.61"/>
    </reaction>
</comment>
<comment type="catalytic activity">
    <reaction evidence="1">
        <text>L-glutaminyl-[protein] + H2O = L-glutamyl-[protein] + NH4(+)</text>
        <dbReference type="Rhea" id="RHEA:16441"/>
        <dbReference type="Rhea" id="RHEA-COMP:10207"/>
        <dbReference type="Rhea" id="RHEA-COMP:10208"/>
        <dbReference type="ChEBI" id="CHEBI:15377"/>
        <dbReference type="ChEBI" id="CHEBI:28938"/>
        <dbReference type="ChEBI" id="CHEBI:29973"/>
        <dbReference type="ChEBI" id="CHEBI:30011"/>
        <dbReference type="EC" id="3.5.1.44"/>
    </reaction>
</comment>
<comment type="subcellular location">
    <subcellularLocation>
        <location evidence="1">Cytoplasm</location>
    </subcellularLocation>
</comment>
<comment type="domain">
    <text evidence="1">Contains a C-terminal catalytic domain, and an N-terminal region which modulates catalytic activity.</text>
</comment>
<comment type="PTM">
    <text evidence="1">Phosphorylated by CheA. Phosphorylation of the N-terminal regulatory domain activates the methylesterase activity.</text>
</comment>
<comment type="similarity">
    <text evidence="1">Belongs to the CheB family.</text>
</comment>
<keyword id="KW-0145">Chemotaxis</keyword>
<keyword id="KW-0963">Cytoplasm</keyword>
<keyword id="KW-0378">Hydrolase</keyword>
<keyword id="KW-0597">Phosphoprotein</keyword>
<keyword id="KW-1185">Reference proteome</keyword>
<protein>
    <recommendedName>
        <fullName evidence="1">Protein-glutamate methylesterase/protein-glutamine glutaminase 3</fullName>
        <ecNumber evidence="1">3.1.1.61</ecNumber>
        <ecNumber evidence="1">3.5.1.44</ecNumber>
    </recommendedName>
</protein>
<accession>Q2IQ87</accession>
<feature type="chain" id="PRO_0000264258" description="Protein-glutamate methylesterase/protein-glutamine glutaminase 3">
    <location>
        <begin position="1"/>
        <end position="342"/>
    </location>
</feature>
<feature type="domain" description="Response regulatory" evidence="1">
    <location>
        <begin position="3"/>
        <end position="120"/>
    </location>
</feature>
<feature type="domain" description="CheB-type methylesterase" evidence="1">
    <location>
        <begin position="152"/>
        <end position="342"/>
    </location>
</feature>
<feature type="active site" evidence="1">
    <location>
        <position position="164"/>
    </location>
</feature>
<feature type="active site" evidence="1">
    <location>
        <position position="191"/>
    </location>
</feature>
<feature type="active site" evidence="1">
    <location>
        <position position="285"/>
    </location>
</feature>
<feature type="modified residue" description="4-aspartylphosphate" evidence="1">
    <location>
        <position position="54"/>
    </location>
</feature>
<organism>
    <name type="scientific">Anaeromyxobacter dehalogenans (strain 2CP-C)</name>
    <dbReference type="NCBI Taxonomy" id="290397"/>
    <lineage>
        <taxon>Bacteria</taxon>
        <taxon>Pseudomonadati</taxon>
        <taxon>Myxococcota</taxon>
        <taxon>Myxococcia</taxon>
        <taxon>Myxococcales</taxon>
        <taxon>Cystobacterineae</taxon>
        <taxon>Anaeromyxobacteraceae</taxon>
        <taxon>Anaeromyxobacter</taxon>
    </lineage>
</organism>
<sequence length="342" mass="34779">MIRVLVVEDMPTARQLLVGILSADPELEVVGQASDGAEALALVRALRPDAITMDVMMMPVDGIQATAQIMAERPTPIVIVTSLDVNEVTLSMKALAAGALAALPKPRGPGSPGFADDARRLVTTVKAMSRVALLRRPEPARAAAPPPAAPPDVPRGRVVAVAASTGGPAALQRILARLPAALPAPLLVVQHIALGFAEGFARWLASAGPLPARVARDGLLLEPGVVHVAPDDRHLGVSADGTRATVTDAAPVGGFRPSGTPLFRSVAAAYGAGAVGVILSGMGRDGVEGLADLRRAGGRVVAQEAASCAVDGMPGAARAAGLADAVLAPDAIADRLALWLRR</sequence>
<gene>
    <name evidence="1" type="primary">cheB3</name>
    <name type="ordered locus">Adeh_1192</name>
</gene>
<reference key="1">
    <citation type="submission" date="2006-01" db="EMBL/GenBank/DDBJ databases">
        <title>Complete sequence of Anaeromyxobacter dehalogenans 2CP-C.</title>
        <authorList>
            <person name="Copeland A."/>
            <person name="Lucas S."/>
            <person name="Lapidus A."/>
            <person name="Barry K."/>
            <person name="Detter J.C."/>
            <person name="Glavina T."/>
            <person name="Hammon N."/>
            <person name="Israni S."/>
            <person name="Pitluck S."/>
            <person name="Brettin T."/>
            <person name="Bruce D."/>
            <person name="Han C."/>
            <person name="Tapia R."/>
            <person name="Gilna P."/>
            <person name="Kiss H."/>
            <person name="Schmutz J."/>
            <person name="Larimer F."/>
            <person name="Land M."/>
            <person name="Kyrpides N."/>
            <person name="Anderson I."/>
            <person name="Sanford R.A."/>
            <person name="Ritalahti K.M."/>
            <person name="Thomas H.S."/>
            <person name="Kirby J.R."/>
            <person name="Zhulin I.B."/>
            <person name="Loeffler F.E."/>
            <person name="Richardson P."/>
        </authorList>
    </citation>
    <scope>NUCLEOTIDE SEQUENCE [LARGE SCALE GENOMIC DNA]</scope>
    <source>
        <strain>2CP-C</strain>
    </source>
</reference>
<dbReference type="EC" id="3.1.1.61" evidence="1"/>
<dbReference type="EC" id="3.5.1.44" evidence="1"/>
<dbReference type="EMBL" id="CP000251">
    <property type="protein sequence ID" value="ABC80966.1"/>
    <property type="molecule type" value="Genomic_DNA"/>
</dbReference>
<dbReference type="RefSeq" id="WP_011420249.1">
    <property type="nucleotide sequence ID" value="NC_007760.1"/>
</dbReference>
<dbReference type="SMR" id="Q2IQ87"/>
<dbReference type="STRING" id="290397.Adeh_1192"/>
<dbReference type="KEGG" id="ade:Adeh_1192"/>
<dbReference type="eggNOG" id="COG2201">
    <property type="taxonomic scope" value="Bacteria"/>
</dbReference>
<dbReference type="HOGENOM" id="CLU_000445_51_0_7"/>
<dbReference type="OrthoDB" id="5490992at2"/>
<dbReference type="Proteomes" id="UP000001935">
    <property type="component" value="Chromosome"/>
</dbReference>
<dbReference type="GO" id="GO:0005737">
    <property type="term" value="C:cytoplasm"/>
    <property type="evidence" value="ECO:0007669"/>
    <property type="project" value="UniProtKB-SubCell"/>
</dbReference>
<dbReference type="GO" id="GO:0000156">
    <property type="term" value="F:phosphorelay response regulator activity"/>
    <property type="evidence" value="ECO:0007669"/>
    <property type="project" value="InterPro"/>
</dbReference>
<dbReference type="GO" id="GO:0008984">
    <property type="term" value="F:protein-glutamate methylesterase activity"/>
    <property type="evidence" value="ECO:0007669"/>
    <property type="project" value="UniProtKB-UniRule"/>
</dbReference>
<dbReference type="GO" id="GO:0050568">
    <property type="term" value="F:protein-glutamine glutaminase activity"/>
    <property type="evidence" value="ECO:0007669"/>
    <property type="project" value="UniProtKB-UniRule"/>
</dbReference>
<dbReference type="GO" id="GO:0006935">
    <property type="term" value="P:chemotaxis"/>
    <property type="evidence" value="ECO:0007669"/>
    <property type="project" value="UniProtKB-UniRule"/>
</dbReference>
<dbReference type="CDD" id="cd16432">
    <property type="entry name" value="CheB_Rec"/>
    <property type="match status" value="1"/>
</dbReference>
<dbReference type="CDD" id="cd17541">
    <property type="entry name" value="REC_CheB-like"/>
    <property type="match status" value="1"/>
</dbReference>
<dbReference type="Gene3D" id="3.40.50.2300">
    <property type="match status" value="1"/>
</dbReference>
<dbReference type="Gene3D" id="3.40.50.180">
    <property type="entry name" value="Methylesterase CheB, C-terminal domain"/>
    <property type="match status" value="1"/>
</dbReference>
<dbReference type="HAMAP" id="MF_00099">
    <property type="entry name" value="CheB_chemtxs"/>
    <property type="match status" value="1"/>
</dbReference>
<dbReference type="InterPro" id="IPR008248">
    <property type="entry name" value="CheB-like"/>
</dbReference>
<dbReference type="InterPro" id="IPR035909">
    <property type="entry name" value="CheB_C"/>
</dbReference>
<dbReference type="InterPro" id="IPR011006">
    <property type="entry name" value="CheY-like_superfamily"/>
</dbReference>
<dbReference type="InterPro" id="IPR000673">
    <property type="entry name" value="Sig_transdc_resp-reg_Me-estase"/>
</dbReference>
<dbReference type="InterPro" id="IPR001789">
    <property type="entry name" value="Sig_transdc_resp-reg_receiver"/>
</dbReference>
<dbReference type="NCBIfam" id="NF001965">
    <property type="entry name" value="PRK00742.1"/>
    <property type="match status" value="1"/>
</dbReference>
<dbReference type="PANTHER" id="PTHR42872">
    <property type="entry name" value="PROTEIN-GLUTAMATE METHYLESTERASE/PROTEIN-GLUTAMINE GLUTAMINASE"/>
    <property type="match status" value="1"/>
</dbReference>
<dbReference type="PANTHER" id="PTHR42872:SF6">
    <property type="entry name" value="PROTEIN-GLUTAMATE METHYLESTERASE_PROTEIN-GLUTAMINE GLUTAMINASE"/>
    <property type="match status" value="1"/>
</dbReference>
<dbReference type="Pfam" id="PF01339">
    <property type="entry name" value="CheB_methylest"/>
    <property type="match status" value="1"/>
</dbReference>
<dbReference type="Pfam" id="PF00072">
    <property type="entry name" value="Response_reg"/>
    <property type="match status" value="1"/>
</dbReference>
<dbReference type="PIRSF" id="PIRSF000876">
    <property type="entry name" value="RR_chemtxs_CheB"/>
    <property type="match status" value="1"/>
</dbReference>
<dbReference type="SMART" id="SM00448">
    <property type="entry name" value="REC"/>
    <property type="match status" value="1"/>
</dbReference>
<dbReference type="SUPFAM" id="SSF52172">
    <property type="entry name" value="CheY-like"/>
    <property type="match status" value="1"/>
</dbReference>
<dbReference type="SUPFAM" id="SSF52738">
    <property type="entry name" value="Methylesterase CheB, C-terminal domain"/>
    <property type="match status" value="1"/>
</dbReference>
<dbReference type="PROSITE" id="PS50122">
    <property type="entry name" value="CHEB"/>
    <property type="match status" value="1"/>
</dbReference>
<dbReference type="PROSITE" id="PS50110">
    <property type="entry name" value="RESPONSE_REGULATORY"/>
    <property type="match status" value="1"/>
</dbReference>
<name>CHEB3_ANADE</name>
<proteinExistence type="inferred from homology"/>